<sequence>METLSFEFPAGQPPKGRALVGCVGSGDLEVLLEPGTPGTLTIQVQTSVNGAEQRWQHLFERIFQEQTPPALNIDIHDFGATPGVVRLRLEQGFEEIGHD</sequence>
<organism>
    <name type="scientific">Pseudomonas fluorescens (strain SBW25)</name>
    <dbReference type="NCBI Taxonomy" id="216595"/>
    <lineage>
        <taxon>Bacteria</taxon>
        <taxon>Pseudomonadati</taxon>
        <taxon>Pseudomonadota</taxon>
        <taxon>Gammaproteobacteria</taxon>
        <taxon>Pseudomonadales</taxon>
        <taxon>Pseudomonadaceae</taxon>
        <taxon>Pseudomonas</taxon>
    </lineage>
</organism>
<protein>
    <recommendedName>
        <fullName evidence="1">Malonate decarboxylase acyl carrier protein</fullName>
    </recommendedName>
    <alternativeName>
        <fullName evidence="1">Malonate decarboxylase subunit delta</fullName>
    </alternativeName>
</protein>
<keyword id="KW-0963">Cytoplasm</keyword>
<keyword id="KW-0597">Phosphoprotein</keyword>
<evidence type="ECO:0000255" key="1">
    <source>
        <dbReference type="HAMAP-Rule" id="MF_00710"/>
    </source>
</evidence>
<feature type="chain" id="PRO_1000212652" description="Malonate decarboxylase acyl carrier protein">
    <location>
        <begin position="1"/>
        <end position="99"/>
    </location>
</feature>
<feature type="modified residue" description="O-(phosphoribosyl dephospho-coenzyme A)serine" evidence="1">
    <location>
        <position position="25"/>
    </location>
</feature>
<gene>
    <name evidence="1" type="primary">mdcC</name>
    <name type="ordered locus">PFLU_5741</name>
</gene>
<reference key="1">
    <citation type="journal article" date="2009" name="Genome Biol.">
        <title>Genomic and genetic analyses of diversity and plant interactions of Pseudomonas fluorescens.</title>
        <authorList>
            <person name="Silby M.W."/>
            <person name="Cerdeno-Tarraga A.M."/>
            <person name="Vernikos G.S."/>
            <person name="Giddens S.R."/>
            <person name="Jackson R.W."/>
            <person name="Preston G.M."/>
            <person name="Zhang X.-X."/>
            <person name="Moon C.D."/>
            <person name="Gehrig S.M."/>
            <person name="Godfrey S.A.C."/>
            <person name="Knight C.G."/>
            <person name="Malone J.G."/>
            <person name="Robinson Z."/>
            <person name="Spiers A.J."/>
            <person name="Harris S."/>
            <person name="Challis G.L."/>
            <person name="Yaxley A.M."/>
            <person name="Harris D."/>
            <person name="Seeger K."/>
            <person name="Murphy L."/>
            <person name="Rutter S."/>
            <person name="Squares R."/>
            <person name="Quail M.A."/>
            <person name="Saunders E."/>
            <person name="Mavromatis K."/>
            <person name="Brettin T.S."/>
            <person name="Bentley S.D."/>
            <person name="Hothersall J."/>
            <person name="Stephens E."/>
            <person name="Thomas C.M."/>
            <person name="Parkhill J."/>
            <person name="Levy S.B."/>
            <person name="Rainey P.B."/>
            <person name="Thomson N.R."/>
        </authorList>
    </citation>
    <scope>NUCLEOTIDE SEQUENCE [LARGE SCALE GENOMIC DNA]</scope>
    <source>
        <strain>SBW25</strain>
    </source>
</reference>
<comment type="function">
    <text evidence="1">Subunit of malonate decarboxylase, it is an acyl carrier protein to which acetyl and malonyl thioester residues are bound via a 2'-(5''-phosphoribosyl)-3'-dephospho-CoA prosthetic group and turn over during the catalytic mechanism.</text>
</comment>
<comment type="subcellular location">
    <subcellularLocation>
        <location evidence="1">Cytoplasm</location>
    </subcellularLocation>
</comment>
<comment type="PTM">
    <text evidence="1">Covalently binds the prosthetic group of malonate decarboxylase.</text>
</comment>
<comment type="similarity">
    <text evidence="1">Belongs to the MdcC family.</text>
</comment>
<dbReference type="EMBL" id="AM181176">
    <property type="protein sequence ID" value="CAY53110.1"/>
    <property type="molecule type" value="Genomic_DNA"/>
</dbReference>
<dbReference type="RefSeq" id="WP_015886328.1">
    <property type="nucleotide sequence ID" value="NC_012660.1"/>
</dbReference>
<dbReference type="SMR" id="C3K3I7"/>
<dbReference type="STRING" id="294.SRM1_05391"/>
<dbReference type="eggNOG" id="COG3052">
    <property type="taxonomic scope" value="Bacteria"/>
</dbReference>
<dbReference type="HOGENOM" id="CLU_173135_1_0_6"/>
<dbReference type="OrthoDB" id="120290at2"/>
<dbReference type="GO" id="GO:0005737">
    <property type="term" value="C:cytoplasm"/>
    <property type="evidence" value="ECO:0007669"/>
    <property type="project" value="UniProtKB-SubCell"/>
</dbReference>
<dbReference type="GO" id="GO:0000036">
    <property type="term" value="F:acyl carrier activity"/>
    <property type="evidence" value="ECO:0007669"/>
    <property type="project" value="UniProtKB-UniRule"/>
</dbReference>
<dbReference type="HAMAP" id="MF_00710">
    <property type="entry name" value="Malonate_deCO2ase_dsu"/>
    <property type="match status" value="1"/>
</dbReference>
<dbReference type="InterPro" id="IPR023439">
    <property type="entry name" value="Mal_deCO2ase/Cit_lyase_ACP"/>
</dbReference>
<dbReference type="InterPro" id="IPR009662">
    <property type="entry name" value="Malonate_deCO2ase_dsu"/>
</dbReference>
<dbReference type="NCBIfam" id="TIGR03130">
    <property type="entry name" value="malonate_delta"/>
    <property type="match status" value="1"/>
</dbReference>
<dbReference type="NCBIfam" id="NF002293">
    <property type="entry name" value="PRK01220.1"/>
    <property type="match status" value="1"/>
</dbReference>
<dbReference type="Pfam" id="PF06857">
    <property type="entry name" value="ACP"/>
    <property type="match status" value="1"/>
</dbReference>
<name>MDCC_PSEFS</name>
<proteinExistence type="inferred from homology"/>
<accession>C3K3I7</accession>